<accession>B2K5P3</accession>
<evidence type="ECO:0000255" key="1">
    <source>
        <dbReference type="HAMAP-Rule" id="MF_00715"/>
    </source>
</evidence>
<evidence type="ECO:0000256" key="2">
    <source>
        <dbReference type="SAM" id="MobiDB-lite"/>
    </source>
</evidence>
<feature type="chain" id="PRO_1000195865" description="Protein SlyX">
    <location>
        <begin position="1"/>
        <end position="72"/>
    </location>
</feature>
<feature type="region of interest" description="Disordered" evidence="2">
    <location>
        <begin position="52"/>
        <end position="72"/>
    </location>
</feature>
<feature type="compositionally biased region" description="Polar residues" evidence="2">
    <location>
        <begin position="55"/>
        <end position="65"/>
    </location>
</feature>
<reference key="1">
    <citation type="submission" date="2008-04" db="EMBL/GenBank/DDBJ databases">
        <title>Complete sequence of Yersinia pseudotuberculosis PB1/+.</title>
        <authorList>
            <person name="Copeland A."/>
            <person name="Lucas S."/>
            <person name="Lapidus A."/>
            <person name="Glavina del Rio T."/>
            <person name="Dalin E."/>
            <person name="Tice H."/>
            <person name="Bruce D."/>
            <person name="Goodwin L."/>
            <person name="Pitluck S."/>
            <person name="Munk A.C."/>
            <person name="Brettin T."/>
            <person name="Detter J.C."/>
            <person name="Han C."/>
            <person name="Tapia R."/>
            <person name="Schmutz J."/>
            <person name="Larimer F."/>
            <person name="Land M."/>
            <person name="Hauser L."/>
            <person name="Challacombe J.F."/>
            <person name="Green L."/>
            <person name="Lindler L.E."/>
            <person name="Nikolich M.P."/>
            <person name="Richardson P."/>
        </authorList>
    </citation>
    <scope>NUCLEOTIDE SEQUENCE [LARGE SCALE GENOMIC DNA]</scope>
    <source>
        <strain>PB1/+</strain>
    </source>
</reference>
<name>SLYX_YERPB</name>
<comment type="similarity">
    <text evidence="1">Belongs to the SlyX family.</text>
</comment>
<gene>
    <name evidence="1" type="primary">slyX</name>
    <name type="ordered locus">YPTS_3903</name>
</gene>
<organism>
    <name type="scientific">Yersinia pseudotuberculosis serotype IB (strain PB1/+)</name>
    <dbReference type="NCBI Taxonomy" id="502801"/>
    <lineage>
        <taxon>Bacteria</taxon>
        <taxon>Pseudomonadati</taxon>
        <taxon>Pseudomonadota</taxon>
        <taxon>Gammaproteobacteria</taxon>
        <taxon>Enterobacterales</taxon>
        <taxon>Yersiniaceae</taxon>
        <taxon>Yersinia</taxon>
    </lineage>
</organism>
<proteinExistence type="inferred from homology"/>
<dbReference type="EMBL" id="CP001048">
    <property type="protein sequence ID" value="ACC90852.1"/>
    <property type="molecule type" value="Genomic_DNA"/>
</dbReference>
<dbReference type="RefSeq" id="WP_002212317.1">
    <property type="nucleotide sequence ID" value="NZ_CP009780.1"/>
</dbReference>
<dbReference type="SMR" id="B2K5P3"/>
<dbReference type="KEGG" id="ypb:YPTS_3903"/>
<dbReference type="PATRIC" id="fig|502801.10.peg.3368"/>
<dbReference type="Gene3D" id="1.20.5.300">
    <property type="match status" value="1"/>
</dbReference>
<dbReference type="HAMAP" id="MF_00715">
    <property type="entry name" value="SlyX"/>
    <property type="match status" value="1"/>
</dbReference>
<dbReference type="InterPro" id="IPR007236">
    <property type="entry name" value="SlyX"/>
</dbReference>
<dbReference type="NCBIfam" id="NF002750">
    <property type="entry name" value="PRK02793.1"/>
    <property type="match status" value="1"/>
</dbReference>
<dbReference type="PANTHER" id="PTHR36508">
    <property type="entry name" value="PROTEIN SLYX"/>
    <property type="match status" value="1"/>
</dbReference>
<dbReference type="PANTHER" id="PTHR36508:SF1">
    <property type="entry name" value="PROTEIN SLYX"/>
    <property type="match status" value="1"/>
</dbReference>
<dbReference type="Pfam" id="PF04102">
    <property type="entry name" value="SlyX"/>
    <property type="match status" value="1"/>
</dbReference>
<protein>
    <recommendedName>
        <fullName evidence="1">Protein SlyX</fullName>
    </recommendedName>
</protein>
<sequence>MEQSLLEQRLEMLESRLAFQEVTIEELNLIVTEHQMEMTKLREHLRLLTDKLRESQSSMLASPSEETPPPHY</sequence>